<reference key="1">
    <citation type="journal article" date="2004" name="Nat. Biotechnol.">
        <title>Complete genome sequence of the metabolically versatile photosynthetic bacterium Rhodopseudomonas palustris.</title>
        <authorList>
            <person name="Larimer F.W."/>
            <person name="Chain P."/>
            <person name="Hauser L."/>
            <person name="Lamerdin J.E."/>
            <person name="Malfatti S."/>
            <person name="Do L."/>
            <person name="Land M.L."/>
            <person name="Pelletier D.A."/>
            <person name="Beatty J.T."/>
            <person name="Lang A.S."/>
            <person name="Tabita F.R."/>
            <person name="Gibson J.L."/>
            <person name="Hanson T.E."/>
            <person name="Bobst C."/>
            <person name="Torres y Torres J.L."/>
            <person name="Peres C."/>
            <person name="Harrison F.H."/>
            <person name="Gibson J."/>
            <person name="Harwood C.S."/>
        </authorList>
    </citation>
    <scope>NUCLEOTIDE SEQUENCE [LARGE SCALE GENOMIC DNA]</scope>
    <source>
        <strain>ATCC BAA-98 / CGA009</strain>
    </source>
</reference>
<accession>Q6NAI4</accession>
<name>AROC_RHOPA</name>
<sequence>MSFNTFGHLFRVTTFGESHGVAIGCVVDGCPPLIPLTEADIQGDLDRRRPGQSRFTTQRQEADQVKILSGVMVHPETGVQVTTGTPIALLIENTDQRSKDYSDIQNKFRPGHADFTYEAKYGIRDYRGGGRSSARETASRVAAGAIARKVIAGMTVRGALVQIGPHKIDRDKWDWDEIGNNPFFCPDKDKAAFYADYLDGIRKSGSSIGAVVEIVAEGVPAGLGAPIYAKLDGDLAAALMSINAVKGVEIGDGFASAELTGEQNADEMRTGNHGPAFLSNHAGGILGGISTGQPVVARFAVKPTSSILTPRKTVDRTGHDTEILTKGRHDPCVGIRAVPVGEAMVACVLADHLLRHRGQVGG</sequence>
<organism>
    <name type="scientific">Rhodopseudomonas palustris (strain ATCC BAA-98 / CGA009)</name>
    <dbReference type="NCBI Taxonomy" id="258594"/>
    <lineage>
        <taxon>Bacteria</taxon>
        <taxon>Pseudomonadati</taxon>
        <taxon>Pseudomonadota</taxon>
        <taxon>Alphaproteobacteria</taxon>
        <taxon>Hyphomicrobiales</taxon>
        <taxon>Nitrobacteraceae</taxon>
        <taxon>Rhodopseudomonas</taxon>
    </lineage>
</organism>
<dbReference type="EC" id="4.2.3.5" evidence="1"/>
<dbReference type="EMBL" id="BX572596">
    <property type="protein sequence ID" value="CAE26644.1"/>
    <property type="molecule type" value="Genomic_DNA"/>
</dbReference>
<dbReference type="RefSeq" id="WP_011156765.1">
    <property type="nucleotide sequence ID" value="NZ_CP116810.1"/>
</dbReference>
<dbReference type="SMR" id="Q6NAI4"/>
<dbReference type="STRING" id="258594.RPA1201"/>
<dbReference type="GeneID" id="66892224"/>
<dbReference type="eggNOG" id="COG0082">
    <property type="taxonomic scope" value="Bacteria"/>
</dbReference>
<dbReference type="HOGENOM" id="CLU_034547_0_0_5"/>
<dbReference type="PhylomeDB" id="Q6NAI4"/>
<dbReference type="UniPathway" id="UPA00053">
    <property type="reaction ID" value="UER00090"/>
</dbReference>
<dbReference type="GO" id="GO:0005829">
    <property type="term" value="C:cytosol"/>
    <property type="evidence" value="ECO:0007669"/>
    <property type="project" value="TreeGrafter"/>
</dbReference>
<dbReference type="GO" id="GO:0004107">
    <property type="term" value="F:chorismate synthase activity"/>
    <property type="evidence" value="ECO:0007669"/>
    <property type="project" value="UniProtKB-UniRule"/>
</dbReference>
<dbReference type="GO" id="GO:0010181">
    <property type="term" value="F:FMN binding"/>
    <property type="evidence" value="ECO:0007669"/>
    <property type="project" value="TreeGrafter"/>
</dbReference>
<dbReference type="GO" id="GO:0008652">
    <property type="term" value="P:amino acid biosynthetic process"/>
    <property type="evidence" value="ECO:0007669"/>
    <property type="project" value="UniProtKB-KW"/>
</dbReference>
<dbReference type="GO" id="GO:0009073">
    <property type="term" value="P:aromatic amino acid family biosynthetic process"/>
    <property type="evidence" value="ECO:0007669"/>
    <property type="project" value="UniProtKB-KW"/>
</dbReference>
<dbReference type="GO" id="GO:0009423">
    <property type="term" value="P:chorismate biosynthetic process"/>
    <property type="evidence" value="ECO:0007669"/>
    <property type="project" value="UniProtKB-UniRule"/>
</dbReference>
<dbReference type="CDD" id="cd07304">
    <property type="entry name" value="Chorismate_synthase"/>
    <property type="match status" value="1"/>
</dbReference>
<dbReference type="Gene3D" id="3.60.150.10">
    <property type="entry name" value="Chorismate synthase AroC"/>
    <property type="match status" value="1"/>
</dbReference>
<dbReference type="HAMAP" id="MF_00300">
    <property type="entry name" value="Chorismate_synth"/>
    <property type="match status" value="1"/>
</dbReference>
<dbReference type="InterPro" id="IPR000453">
    <property type="entry name" value="Chorismate_synth"/>
</dbReference>
<dbReference type="InterPro" id="IPR035904">
    <property type="entry name" value="Chorismate_synth_AroC_sf"/>
</dbReference>
<dbReference type="InterPro" id="IPR020541">
    <property type="entry name" value="Chorismate_synthase_CS"/>
</dbReference>
<dbReference type="NCBIfam" id="TIGR00033">
    <property type="entry name" value="aroC"/>
    <property type="match status" value="1"/>
</dbReference>
<dbReference type="NCBIfam" id="NF003793">
    <property type="entry name" value="PRK05382.1"/>
    <property type="match status" value="1"/>
</dbReference>
<dbReference type="PANTHER" id="PTHR21085">
    <property type="entry name" value="CHORISMATE SYNTHASE"/>
    <property type="match status" value="1"/>
</dbReference>
<dbReference type="PANTHER" id="PTHR21085:SF0">
    <property type="entry name" value="CHORISMATE SYNTHASE"/>
    <property type="match status" value="1"/>
</dbReference>
<dbReference type="Pfam" id="PF01264">
    <property type="entry name" value="Chorismate_synt"/>
    <property type="match status" value="1"/>
</dbReference>
<dbReference type="PIRSF" id="PIRSF001456">
    <property type="entry name" value="Chorismate_synth"/>
    <property type="match status" value="1"/>
</dbReference>
<dbReference type="SUPFAM" id="SSF103263">
    <property type="entry name" value="Chorismate synthase, AroC"/>
    <property type="match status" value="1"/>
</dbReference>
<dbReference type="PROSITE" id="PS00787">
    <property type="entry name" value="CHORISMATE_SYNTHASE_1"/>
    <property type="match status" value="1"/>
</dbReference>
<dbReference type="PROSITE" id="PS00788">
    <property type="entry name" value="CHORISMATE_SYNTHASE_2"/>
    <property type="match status" value="1"/>
</dbReference>
<dbReference type="PROSITE" id="PS00789">
    <property type="entry name" value="CHORISMATE_SYNTHASE_3"/>
    <property type="match status" value="1"/>
</dbReference>
<proteinExistence type="inferred from homology"/>
<evidence type="ECO:0000255" key="1">
    <source>
        <dbReference type="HAMAP-Rule" id="MF_00300"/>
    </source>
</evidence>
<comment type="function">
    <text evidence="1">Catalyzes the anti-1,4-elimination of the C-3 phosphate and the C-6 proR hydrogen from 5-enolpyruvylshikimate-3-phosphate (EPSP) to yield chorismate, which is the branch point compound that serves as the starting substrate for the three terminal pathways of aromatic amino acid biosynthesis. This reaction introduces a second double bond into the aromatic ring system.</text>
</comment>
<comment type="catalytic activity">
    <reaction evidence="1">
        <text>5-O-(1-carboxyvinyl)-3-phosphoshikimate = chorismate + phosphate</text>
        <dbReference type="Rhea" id="RHEA:21020"/>
        <dbReference type="ChEBI" id="CHEBI:29748"/>
        <dbReference type="ChEBI" id="CHEBI:43474"/>
        <dbReference type="ChEBI" id="CHEBI:57701"/>
        <dbReference type="EC" id="4.2.3.5"/>
    </reaction>
</comment>
<comment type="cofactor">
    <cofactor evidence="1">
        <name>FMNH2</name>
        <dbReference type="ChEBI" id="CHEBI:57618"/>
    </cofactor>
    <text evidence="1">Reduced FMN (FMNH(2)).</text>
</comment>
<comment type="pathway">
    <text evidence="1">Metabolic intermediate biosynthesis; chorismate biosynthesis; chorismate from D-erythrose 4-phosphate and phosphoenolpyruvate: step 7/7.</text>
</comment>
<comment type="subunit">
    <text evidence="1">Homotetramer.</text>
</comment>
<comment type="similarity">
    <text evidence="1">Belongs to the chorismate synthase family.</text>
</comment>
<keyword id="KW-0028">Amino-acid biosynthesis</keyword>
<keyword id="KW-0057">Aromatic amino acid biosynthesis</keyword>
<keyword id="KW-0274">FAD</keyword>
<keyword id="KW-0285">Flavoprotein</keyword>
<keyword id="KW-0288">FMN</keyword>
<keyword id="KW-0456">Lyase</keyword>
<keyword id="KW-0521">NADP</keyword>
<protein>
    <recommendedName>
        <fullName evidence="1">Chorismate synthase</fullName>
        <shortName evidence="1">CS</shortName>
        <ecNumber evidence="1">4.2.3.5</ecNumber>
    </recommendedName>
    <alternativeName>
        <fullName evidence="1">5-enolpyruvylshikimate-3-phosphate phospholyase</fullName>
    </alternativeName>
</protein>
<gene>
    <name evidence="1" type="primary">aroC</name>
    <name type="ordered locus">RPA1201</name>
</gene>
<feature type="chain" id="PRO_0000140635" description="Chorismate synthase">
    <location>
        <begin position="1"/>
        <end position="362"/>
    </location>
</feature>
<feature type="binding site" evidence="1">
    <location>
        <position position="48"/>
    </location>
    <ligand>
        <name>NADP(+)</name>
        <dbReference type="ChEBI" id="CHEBI:58349"/>
    </ligand>
</feature>
<feature type="binding site" evidence="1">
    <location>
        <position position="54"/>
    </location>
    <ligand>
        <name>NADP(+)</name>
        <dbReference type="ChEBI" id="CHEBI:58349"/>
    </ligand>
</feature>
<feature type="binding site" evidence="1">
    <location>
        <begin position="131"/>
        <end position="133"/>
    </location>
    <ligand>
        <name>FMN</name>
        <dbReference type="ChEBI" id="CHEBI:58210"/>
    </ligand>
</feature>
<feature type="binding site" evidence="1">
    <location>
        <begin position="243"/>
        <end position="244"/>
    </location>
    <ligand>
        <name>FMN</name>
        <dbReference type="ChEBI" id="CHEBI:58210"/>
    </ligand>
</feature>
<feature type="binding site" evidence="1">
    <location>
        <position position="287"/>
    </location>
    <ligand>
        <name>FMN</name>
        <dbReference type="ChEBI" id="CHEBI:58210"/>
    </ligand>
</feature>
<feature type="binding site" evidence="1">
    <location>
        <begin position="302"/>
        <end position="306"/>
    </location>
    <ligand>
        <name>FMN</name>
        <dbReference type="ChEBI" id="CHEBI:58210"/>
    </ligand>
</feature>
<feature type="binding site" evidence="1">
    <location>
        <position position="328"/>
    </location>
    <ligand>
        <name>FMN</name>
        <dbReference type="ChEBI" id="CHEBI:58210"/>
    </ligand>
</feature>